<gene>
    <name type="primary">PRNP</name>
    <name type="synonym">PRP</name>
</gene>
<comment type="function">
    <text evidence="2 4">Its primary physiological function is unclear. Has cytoprotective activity against internal or environmental stresses. May play a role in neuronal development and synaptic plasticity. May be required for neuronal myelin sheath maintenance. May play a role in iron uptake and iron homeostasis. Soluble oligomers are toxic to cultured neuroblastoma cells and induce apoptosis (in vitro). Association with GPC1 (via its heparan sulfate chains) targets PRNP to lipid rafts. Also provides Cu(2+) or Zn(2+) for the ascorbate-mediated GPC1 deaminase degradation of its heparan sulfate side chains (By similarity).</text>
</comment>
<comment type="subunit">
    <text evidence="2 4">Monomer and homodimer. Has a tendency to aggregate into amyloid fibrils containing a cross-beta spine, formed by a steric zipper of superposed beta-strands. Soluble oligomers may represent an intermediate stage on the path to fibril formation. Copper binding may promote oligomerization. Interacts with GRB2, APP, ERI3/PRNPIP and SYN1. Mislocalized cytosolically exposed PrP interacts with MGRN1; this interaction alters MGRN1 subcellular location and causes lysosomal enlargement. Interacts with KIAA1191.</text>
</comment>
<comment type="subcellular location">
    <subcellularLocation>
        <location evidence="2">Cell membrane</location>
        <topology evidence="2">Lipid-anchor</topology>
        <topology evidence="2">GPI-anchor</topology>
    </subcellularLocation>
    <subcellularLocation>
        <location evidence="4">Golgi apparatus</location>
    </subcellularLocation>
    <text evidence="2">Targeted to lipid rafts via association with the heparan sulfate chains of GPC1. Colocates, in the presence of Cu(2+), to vesicles in para- and perinuclear regions, where both proteins undergo internalization. Heparin displaces PRNP from lipid rafts and promotes endocytosis.</text>
</comment>
<comment type="domain">
    <text evidence="2">The normal, monomeric form has a mainly alpha-helical structure. The disease-associated, protease-resistant form forms amyloid fibrils containing a cross-beta spine, formed by a steric zipper of superposed beta-strands. Disease mutations may favor intermolecular contacts via short beta strands, and may thereby trigger oligomerization.</text>
</comment>
<comment type="domain">
    <text evidence="2">Contains an N-terminal region composed of octamer repeats. At low copper concentrations, the sidechains of His residues from three or four repeats contribute to the binding of a single copper ion. Alternatively, a copper ion can be bound by interaction with the sidechain and backbone amide nitrogen of a single His residue. The observed copper binding stoichiometry suggests that two repeat regions cooperate to stabilize the binding of a single copper ion. At higher copper concentrations, each octamer can bind one copper ion by interactions with the His sidechain and Gly backbone atoms. A mixture of binding types may occur, especially in the case of octamer repeat expansion. Copper binding may stabilize the conformation of this region and may promote oligomerization.</text>
</comment>
<comment type="disease">
    <text evidence="7">Found in high quantity in the brain of humans and animals infected with degenerative neurological diseases such as kuru, Creutzfeldt-Jakob disease (CJD), Gerstmann-Straussler syndrome (GSS), scrapie, bovine spongiform encephalopathy (BSE), transmissible mink encephalopathy (TME), etc.</text>
</comment>
<comment type="similarity">
    <text evidence="7">Belongs to the prion family.</text>
</comment>
<accession>Q7JIY2</accession>
<keyword id="KW-0034">Amyloid</keyword>
<keyword id="KW-1003">Cell membrane</keyword>
<keyword id="KW-0186">Copper</keyword>
<keyword id="KW-1015">Disulfide bond</keyword>
<keyword id="KW-0325">Glycoprotein</keyword>
<keyword id="KW-0333">Golgi apparatus</keyword>
<keyword id="KW-0336">GPI-anchor</keyword>
<keyword id="KW-0449">Lipoprotein</keyword>
<keyword id="KW-0472">Membrane</keyword>
<keyword id="KW-0479">Metal-binding</keyword>
<keyword id="KW-0640">Prion</keyword>
<keyword id="KW-0677">Repeat</keyword>
<keyword id="KW-0732">Signal</keyword>
<keyword id="KW-0862">Zinc</keyword>
<sequence>MVKSHIGSWILVLFVAMWSDVGLCKKRPKPGGGWNTGGSRYPGQGSPGGNRYPPQGGGGWGQPHGGGWGQPHGGGWGQPHGGGWGQPHGGGGWGQGGSHSQWNKPSKPKTNMKHVAGAAAAGAVVGGLGGYMLGSAMSRPLIHFGNDYEDRYYRENMYRYPNQVYYRPVDQYSNQNNFVHDCVNITVKQHTVTTTTKGENFTETDIKIMERVVEQMCITQYQRESQAYYQRGASVILFSSPPVILLISFLIFLIVG</sequence>
<evidence type="ECO:0000250" key="1"/>
<evidence type="ECO:0000250" key="2">
    <source>
        <dbReference type="UniProtKB" id="P04156"/>
    </source>
</evidence>
<evidence type="ECO:0000250" key="3">
    <source>
        <dbReference type="UniProtKB" id="P04273"/>
    </source>
</evidence>
<evidence type="ECO:0000250" key="4">
    <source>
        <dbReference type="UniProtKB" id="P04925"/>
    </source>
</evidence>
<evidence type="ECO:0000255" key="5"/>
<evidence type="ECO:0000256" key="6">
    <source>
        <dbReference type="SAM" id="MobiDB-lite"/>
    </source>
</evidence>
<evidence type="ECO:0000305" key="7"/>
<organism>
    <name type="scientific">Ovibos moschatus</name>
    <name type="common">Muskox</name>
    <dbReference type="NCBI Taxonomy" id="37176"/>
    <lineage>
        <taxon>Eukaryota</taxon>
        <taxon>Metazoa</taxon>
        <taxon>Chordata</taxon>
        <taxon>Craniata</taxon>
        <taxon>Vertebrata</taxon>
        <taxon>Euteleostomi</taxon>
        <taxon>Mammalia</taxon>
        <taxon>Eutheria</taxon>
        <taxon>Laurasiatheria</taxon>
        <taxon>Artiodactyla</taxon>
        <taxon>Ruminantia</taxon>
        <taxon>Pecora</taxon>
        <taxon>Bovidae</taxon>
        <taxon>Caprinae</taxon>
        <taxon>Ovibos</taxon>
    </lineage>
</organism>
<name>PRIO_OVIMO</name>
<proteinExistence type="inferred from homology"/>
<reference key="1">
    <citation type="journal article" date="1999" name="J. Mol. Biol.">
        <title>Analysis of 27 mammalian and 9 avian PrPs reveals high conservation of flexible regions of the prion protein.</title>
        <authorList>
            <person name="Wopfner F."/>
            <person name="Weidenhofer G."/>
            <person name="Schneider R."/>
            <person name="von Brunn A."/>
            <person name="Gilch S."/>
            <person name="Schwarz T.F."/>
            <person name="Werner T."/>
            <person name="Schatzl H.M."/>
        </authorList>
    </citation>
    <scope>NUCLEOTIDE SEQUENCE [GENOMIC DNA]</scope>
</reference>
<protein>
    <recommendedName>
        <fullName>Major prion protein</fullName>
        <shortName>PrP</shortName>
    </recommendedName>
    <cdAntigenName>CD230</cdAntigenName>
</protein>
<feature type="signal peptide" evidence="1">
    <location>
        <begin position="1"/>
        <end position="24"/>
    </location>
</feature>
<feature type="chain" id="PRO_0000025707" description="Major prion protein">
    <location>
        <begin position="25"/>
        <end position="233"/>
    </location>
</feature>
<feature type="propeptide" id="PRO_0000025708" description="Removed in mature form" evidence="5">
    <location>
        <begin position="234"/>
        <end position="256"/>
    </location>
</feature>
<feature type="repeat" description="1">
    <location>
        <begin position="54"/>
        <end position="62"/>
    </location>
</feature>
<feature type="repeat" description="2">
    <location>
        <begin position="63"/>
        <end position="70"/>
    </location>
</feature>
<feature type="repeat" description="3">
    <location>
        <begin position="71"/>
        <end position="78"/>
    </location>
</feature>
<feature type="repeat" description="4">
    <location>
        <begin position="79"/>
        <end position="86"/>
    </location>
</feature>
<feature type="repeat" description="5">
    <location>
        <begin position="87"/>
        <end position="95"/>
    </location>
</feature>
<feature type="region of interest" description="Interaction with GRB2, ERI3 and SYN1" evidence="4">
    <location>
        <begin position="25"/>
        <end position="233"/>
    </location>
</feature>
<feature type="region of interest" description="Disordered" evidence="6">
    <location>
        <begin position="28"/>
        <end position="110"/>
    </location>
</feature>
<feature type="region of interest" description="5 X 8 AA tandem repeats of P-H-G-G-G-W-G-Q">
    <location>
        <begin position="54"/>
        <end position="95"/>
    </location>
</feature>
<feature type="compositionally biased region" description="Gly residues" evidence="6">
    <location>
        <begin position="55"/>
        <end position="97"/>
    </location>
</feature>
<feature type="binding site" evidence="2">
    <location>
        <position position="64"/>
    </location>
    <ligand>
        <name>Cu(2+)</name>
        <dbReference type="ChEBI" id="CHEBI:29036"/>
        <label>1</label>
    </ligand>
</feature>
<feature type="binding site" evidence="2">
    <location>
        <position position="65"/>
    </location>
    <ligand>
        <name>Cu(2+)</name>
        <dbReference type="ChEBI" id="CHEBI:29036"/>
        <label>1</label>
    </ligand>
</feature>
<feature type="binding site" evidence="2">
    <location>
        <position position="66"/>
    </location>
    <ligand>
        <name>Cu(2+)</name>
        <dbReference type="ChEBI" id="CHEBI:29036"/>
        <label>1</label>
    </ligand>
</feature>
<feature type="binding site" evidence="2">
    <location>
        <position position="72"/>
    </location>
    <ligand>
        <name>Cu(2+)</name>
        <dbReference type="ChEBI" id="CHEBI:29036"/>
        <label>2</label>
    </ligand>
</feature>
<feature type="binding site" evidence="2">
    <location>
        <position position="73"/>
    </location>
    <ligand>
        <name>Cu(2+)</name>
        <dbReference type="ChEBI" id="CHEBI:29036"/>
        <label>2</label>
    </ligand>
</feature>
<feature type="binding site" evidence="2">
    <location>
        <position position="74"/>
    </location>
    <ligand>
        <name>Cu(2+)</name>
        <dbReference type="ChEBI" id="CHEBI:29036"/>
        <label>2</label>
    </ligand>
</feature>
<feature type="binding site" evidence="2">
    <location>
        <position position="80"/>
    </location>
    <ligand>
        <name>Cu(2+)</name>
        <dbReference type="ChEBI" id="CHEBI:29036"/>
        <label>3</label>
    </ligand>
</feature>
<feature type="binding site" evidence="2">
    <location>
        <position position="81"/>
    </location>
    <ligand>
        <name>Cu(2+)</name>
        <dbReference type="ChEBI" id="CHEBI:29036"/>
        <label>3</label>
    </ligand>
</feature>
<feature type="binding site" evidence="2">
    <location>
        <position position="82"/>
    </location>
    <ligand>
        <name>Cu(2+)</name>
        <dbReference type="ChEBI" id="CHEBI:29036"/>
        <label>3</label>
    </ligand>
</feature>
<feature type="binding site" evidence="2">
    <location>
        <position position="88"/>
    </location>
    <ligand>
        <name>Cu(2+)</name>
        <dbReference type="ChEBI" id="CHEBI:29036"/>
        <label>4</label>
    </ligand>
</feature>
<feature type="binding site" evidence="2">
    <location>
        <position position="90"/>
    </location>
    <ligand>
        <name>Cu(2+)</name>
        <dbReference type="ChEBI" id="CHEBI:29036"/>
        <label>4</label>
    </ligand>
</feature>
<feature type="binding site" evidence="2">
    <location>
        <position position="91"/>
    </location>
    <ligand>
        <name>Cu(2+)</name>
        <dbReference type="ChEBI" id="CHEBI:29036"/>
        <label>4</label>
    </ligand>
</feature>
<feature type="lipid moiety-binding region" description="GPI-anchor amidated alanine" evidence="5">
    <location>
        <position position="233"/>
    </location>
</feature>
<feature type="glycosylation site" description="N-linked (GlcNAc...) asparagine" evidence="7">
    <location>
        <position position="184"/>
    </location>
</feature>
<feature type="glycosylation site" description="N-linked (GlcNAc...) asparagine" evidence="7">
    <location>
        <position position="200"/>
    </location>
</feature>
<feature type="disulfide bond" evidence="3">
    <location>
        <begin position="182"/>
        <end position="217"/>
    </location>
</feature>
<dbReference type="EMBL" id="AF117320">
    <property type="protein sequence ID" value="AAD19991.1"/>
    <property type="molecule type" value="Genomic_DNA"/>
</dbReference>
<dbReference type="SMR" id="Q7JIY2"/>
<dbReference type="GlyCosmos" id="Q7JIY2">
    <property type="glycosylation" value="2 sites, No reported glycans"/>
</dbReference>
<dbReference type="GO" id="GO:0005794">
    <property type="term" value="C:Golgi apparatus"/>
    <property type="evidence" value="ECO:0007669"/>
    <property type="project" value="UniProtKB-SubCell"/>
</dbReference>
<dbReference type="GO" id="GO:0005886">
    <property type="term" value="C:plasma membrane"/>
    <property type="evidence" value="ECO:0007669"/>
    <property type="project" value="UniProtKB-SubCell"/>
</dbReference>
<dbReference type="GO" id="GO:0098552">
    <property type="term" value="C:side of membrane"/>
    <property type="evidence" value="ECO:0007669"/>
    <property type="project" value="UniProtKB-KW"/>
</dbReference>
<dbReference type="GO" id="GO:0005507">
    <property type="term" value="F:copper ion binding"/>
    <property type="evidence" value="ECO:0000250"/>
    <property type="project" value="UniProtKB"/>
</dbReference>
<dbReference type="GO" id="GO:0051260">
    <property type="term" value="P:protein homooligomerization"/>
    <property type="evidence" value="ECO:0007669"/>
    <property type="project" value="InterPro"/>
</dbReference>
<dbReference type="FunFam" id="1.10.790.10:FF:000001">
    <property type="entry name" value="Major prion protein"/>
    <property type="match status" value="1"/>
</dbReference>
<dbReference type="Gene3D" id="1.10.790.10">
    <property type="entry name" value="Prion/Doppel protein, beta-ribbon domain"/>
    <property type="match status" value="1"/>
</dbReference>
<dbReference type="InterPro" id="IPR000817">
    <property type="entry name" value="Prion"/>
</dbReference>
<dbReference type="InterPro" id="IPR036924">
    <property type="entry name" value="Prion/Doppel_b-ribbon_dom_sf"/>
</dbReference>
<dbReference type="InterPro" id="IPR022416">
    <property type="entry name" value="Prion/Doppel_prot_b-ribbon_dom"/>
</dbReference>
<dbReference type="InterPro" id="IPR020949">
    <property type="entry name" value="Prion_copper_b_octapeptide"/>
</dbReference>
<dbReference type="InterPro" id="IPR025860">
    <property type="entry name" value="Prion_N"/>
</dbReference>
<dbReference type="PANTHER" id="PTHR15506">
    <property type="entry name" value="DOPPEL PRION"/>
    <property type="match status" value="1"/>
</dbReference>
<dbReference type="PANTHER" id="PTHR15506:SF2">
    <property type="entry name" value="MAJOR PRION PROTEIN"/>
    <property type="match status" value="1"/>
</dbReference>
<dbReference type="Pfam" id="PF00377">
    <property type="entry name" value="Prion"/>
    <property type="match status" value="1"/>
</dbReference>
<dbReference type="Pfam" id="PF11587">
    <property type="entry name" value="Prion_bPrPp"/>
    <property type="match status" value="1"/>
</dbReference>
<dbReference type="Pfam" id="PF03991">
    <property type="entry name" value="Prion_octapep"/>
    <property type="match status" value="1"/>
</dbReference>
<dbReference type="PRINTS" id="PR00341">
    <property type="entry name" value="PRION"/>
</dbReference>
<dbReference type="SMART" id="SM00157">
    <property type="entry name" value="PRP"/>
    <property type="match status" value="1"/>
</dbReference>
<dbReference type="SUPFAM" id="SSF54098">
    <property type="entry name" value="Prion-like"/>
    <property type="match status" value="1"/>
</dbReference>
<dbReference type="PROSITE" id="PS00291">
    <property type="entry name" value="PRION_1"/>
    <property type="match status" value="1"/>
</dbReference>
<dbReference type="PROSITE" id="PS00706">
    <property type="entry name" value="PRION_2"/>
    <property type="match status" value="1"/>
</dbReference>